<organism>
    <name type="scientific">Chlamydia trachomatis serovar D (strain ATCC VR-885 / DSM 19411 / UW-3/Cx)</name>
    <dbReference type="NCBI Taxonomy" id="272561"/>
    <lineage>
        <taxon>Bacteria</taxon>
        <taxon>Pseudomonadati</taxon>
        <taxon>Chlamydiota</taxon>
        <taxon>Chlamydiia</taxon>
        <taxon>Chlamydiales</taxon>
        <taxon>Chlamydiaceae</taxon>
        <taxon>Chlamydia/Chlamydophila group</taxon>
        <taxon>Chlamydia</taxon>
    </lineage>
</organism>
<proteinExistence type="inferred from homology"/>
<comment type="function">
    <text evidence="1">One of the essential components for the initiation of protein synthesis. Protects formylmethionyl-tRNA from spontaneous hydrolysis and promotes its binding to the 30S ribosomal subunits. Also involved in the hydrolysis of GTP during the formation of the 70S ribosomal complex (By similarity).</text>
</comment>
<comment type="subcellular location">
    <subcellularLocation>
        <location evidence="1">Cytoplasm</location>
    </subcellularLocation>
</comment>
<comment type="similarity">
    <text evidence="3">Belongs to the TRAFAC class translation factor GTPase superfamily. Classic translation factor GTPase family. IF-2 subfamily.</text>
</comment>
<accession>O84098</accession>
<feature type="chain" id="PRO_0000137191" description="Translation initiation factor IF-2">
    <location>
        <begin position="1"/>
        <end position="892"/>
    </location>
</feature>
<feature type="domain" description="tr-type G">
    <location>
        <begin position="397"/>
        <end position="566"/>
    </location>
</feature>
<feature type="region of interest" description="Disordered" evidence="2">
    <location>
        <begin position="32"/>
        <end position="102"/>
    </location>
</feature>
<feature type="region of interest" description="Disordered" evidence="2">
    <location>
        <begin position="114"/>
        <end position="300"/>
    </location>
</feature>
<feature type="region of interest" description="G1" evidence="1">
    <location>
        <begin position="406"/>
        <end position="413"/>
    </location>
</feature>
<feature type="region of interest" description="G2" evidence="1">
    <location>
        <begin position="431"/>
        <end position="435"/>
    </location>
</feature>
<feature type="region of interest" description="G3" evidence="1">
    <location>
        <begin position="452"/>
        <end position="455"/>
    </location>
</feature>
<feature type="region of interest" description="G4" evidence="1">
    <location>
        <begin position="506"/>
        <end position="509"/>
    </location>
</feature>
<feature type="region of interest" description="G5" evidence="1">
    <location>
        <begin position="542"/>
        <end position="544"/>
    </location>
</feature>
<feature type="compositionally biased region" description="Polar residues" evidence="2">
    <location>
        <begin position="35"/>
        <end position="48"/>
    </location>
</feature>
<feature type="compositionally biased region" description="Basic and acidic residues" evidence="2">
    <location>
        <begin position="139"/>
        <end position="166"/>
    </location>
</feature>
<feature type="compositionally biased region" description="Low complexity" evidence="2">
    <location>
        <begin position="200"/>
        <end position="211"/>
    </location>
</feature>
<feature type="compositionally biased region" description="Polar residues" evidence="2">
    <location>
        <begin position="212"/>
        <end position="224"/>
    </location>
</feature>
<feature type="compositionally biased region" description="Low complexity" evidence="2">
    <location>
        <begin position="225"/>
        <end position="238"/>
    </location>
</feature>
<feature type="compositionally biased region" description="Basic and acidic residues" evidence="2">
    <location>
        <begin position="252"/>
        <end position="276"/>
    </location>
</feature>
<feature type="binding site" evidence="1">
    <location>
        <begin position="406"/>
        <end position="413"/>
    </location>
    <ligand>
        <name>GTP</name>
        <dbReference type="ChEBI" id="CHEBI:37565"/>
    </ligand>
</feature>
<feature type="binding site" evidence="1">
    <location>
        <begin position="452"/>
        <end position="456"/>
    </location>
    <ligand>
        <name>GTP</name>
        <dbReference type="ChEBI" id="CHEBI:37565"/>
    </ligand>
</feature>
<feature type="binding site" evidence="1">
    <location>
        <begin position="506"/>
        <end position="509"/>
    </location>
    <ligand>
        <name>GTP</name>
        <dbReference type="ChEBI" id="CHEBI:37565"/>
    </ligand>
</feature>
<dbReference type="EMBL" id="AE001273">
    <property type="protein sequence ID" value="AAC67687.1"/>
    <property type="molecule type" value="Genomic_DNA"/>
</dbReference>
<dbReference type="PIR" id="H71558">
    <property type="entry name" value="H71558"/>
</dbReference>
<dbReference type="RefSeq" id="NP_219599.1">
    <property type="nucleotide sequence ID" value="NC_000117.1"/>
</dbReference>
<dbReference type="RefSeq" id="WP_009871444.1">
    <property type="nucleotide sequence ID" value="NC_000117.1"/>
</dbReference>
<dbReference type="SMR" id="O84098"/>
<dbReference type="FunCoup" id="O84098">
    <property type="interactions" value="275"/>
</dbReference>
<dbReference type="STRING" id="272561.CT_096"/>
<dbReference type="EnsemblBacteria" id="AAC67687">
    <property type="protein sequence ID" value="AAC67687"/>
    <property type="gene ID" value="CT_096"/>
</dbReference>
<dbReference type="GeneID" id="884165"/>
<dbReference type="KEGG" id="ctr:CT_096"/>
<dbReference type="PATRIC" id="fig|272561.5.peg.105"/>
<dbReference type="HOGENOM" id="CLU_006301_3_1_0"/>
<dbReference type="InParanoid" id="O84098"/>
<dbReference type="OrthoDB" id="9811804at2"/>
<dbReference type="Proteomes" id="UP000000431">
    <property type="component" value="Chromosome"/>
</dbReference>
<dbReference type="GO" id="GO:0005737">
    <property type="term" value="C:cytoplasm"/>
    <property type="evidence" value="ECO:0000318"/>
    <property type="project" value="GO_Central"/>
</dbReference>
<dbReference type="GO" id="GO:0005829">
    <property type="term" value="C:cytosol"/>
    <property type="evidence" value="ECO:0000318"/>
    <property type="project" value="GO_Central"/>
</dbReference>
<dbReference type="GO" id="GO:0005525">
    <property type="term" value="F:GTP binding"/>
    <property type="evidence" value="ECO:0007669"/>
    <property type="project" value="UniProtKB-KW"/>
</dbReference>
<dbReference type="GO" id="GO:0003924">
    <property type="term" value="F:GTPase activity"/>
    <property type="evidence" value="ECO:0007669"/>
    <property type="project" value="UniProtKB-UniRule"/>
</dbReference>
<dbReference type="GO" id="GO:0003743">
    <property type="term" value="F:translation initiation factor activity"/>
    <property type="evidence" value="ECO:0000318"/>
    <property type="project" value="GO_Central"/>
</dbReference>
<dbReference type="GO" id="GO:0006413">
    <property type="term" value="P:translational initiation"/>
    <property type="evidence" value="ECO:0000318"/>
    <property type="project" value="GO_Central"/>
</dbReference>
<dbReference type="CDD" id="cd01887">
    <property type="entry name" value="IF2_eIF5B"/>
    <property type="match status" value="1"/>
</dbReference>
<dbReference type="CDD" id="cd03702">
    <property type="entry name" value="IF2_mtIF2_II"/>
    <property type="match status" value="1"/>
</dbReference>
<dbReference type="CDD" id="cd03692">
    <property type="entry name" value="mtIF2_IVc"/>
    <property type="match status" value="1"/>
</dbReference>
<dbReference type="FunFam" id="2.40.30.10:FF:000008">
    <property type="entry name" value="Translation initiation factor IF-2"/>
    <property type="match status" value="1"/>
</dbReference>
<dbReference type="FunFam" id="2.40.30.10:FF:000054">
    <property type="entry name" value="Translation initiation factor IF-2"/>
    <property type="match status" value="1"/>
</dbReference>
<dbReference type="FunFam" id="3.40.50.10050:FF:000001">
    <property type="entry name" value="Translation initiation factor IF-2"/>
    <property type="match status" value="1"/>
</dbReference>
<dbReference type="FunFam" id="3.40.50.300:FF:000019">
    <property type="entry name" value="Translation initiation factor IF-2"/>
    <property type="match status" value="1"/>
</dbReference>
<dbReference type="Gene3D" id="3.40.50.300">
    <property type="entry name" value="P-loop containing nucleotide triphosphate hydrolases"/>
    <property type="match status" value="1"/>
</dbReference>
<dbReference type="Gene3D" id="2.40.30.10">
    <property type="entry name" value="Translation factors"/>
    <property type="match status" value="2"/>
</dbReference>
<dbReference type="Gene3D" id="3.40.50.10050">
    <property type="entry name" value="Translation initiation factor IF- 2, domain 3"/>
    <property type="match status" value="1"/>
</dbReference>
<dbReference type="HAMAP" id="MF_00100_B">
    <property type="entry name" value="IF_2_B"/>
    <property type="match status" value="1"/>
</dbReference>
<dbReference type="InterPro" id="IPR053905">
    <property type="entry name" value="EF-G-like_DII"/>
</dbReference>
<dbReference type="InterPro" id="IPR004161">
    <property type="entry name" value="EFTu-like_2"/>
</dbReference>
<dbReference type="InterPro" id="IPR044145">
    <property type="entry name" value="IF2_II"/>
</dbReference>
<dbReference type="InterPro" id="IPR006847">
    <property type="entry name" value="IF2_N"/>
</dbReference>
<dbReference type="InterPro" id="IPR027417">
    <property type="entry name" value="P-loop_NTPase"/>
</dbReference>
<dbReference type="InterPro" id="IPR005225">
    <property type="entry name" value="Small_GTP-bd"/>
</dbReference>
<dbReference type="InterPro" id="IPR000795">
    <property type="entry name" value="T_Tr_GTP-bd_dom"/>
</dbReference>
<dbReference type="InterPro" id="IPR000178">
    <property type="entry name" value="TF_IF2_bacterial-like"/>
</dbReference>
<dbReference type="InterPro" id="IPR015760">
    <property type="entry name" value="TIF_IF2"/>
</dbReference>
<dbReference type="InterPro" id="IPR023115">
    <property type="entry name" value="TIF_IF2_dom3"/>
</dbReference>
<dbReference type="InterPro" id="IPR036925">
    <property type="entry name" value="TIF_IF2_dom3_sf"/>
</dbReference>
<dbReference type="InterPro" id="IPR009000">
    <property type="entry name" value="Transl_B-barrel_sf"/>
</dbReference>
<dbReference type="NCBIfam" id="TIGR00487">
    <property type="entry name" value="IF-2"/>
    <property type="match status" value="1"/>
</dbReference>
<dbReference type="NCBIfam" id="TIGR00231">
    <property type="entry name" value="small_GTP"/>
    <property type="match status" value="1"/>
</dbReference>
<dbReference type="PANTHER" id="PTHR43381:SF5">
    <property type="entry name" value="TR-TYPE G DOMAIN-CONTAINING PROTEIN"/>
    <property type="match status" value="1"/>
</dbReference>
<dbReference type="PANTHER" id="PTHR43381">
    <property type="entry name" value="TRANSLATION INITIATION FACTOR IF-2-RELATED"/>
    <property type="match status" value="1"/>
</dbReference>
<dbReference type="Pfam" id="PF22042">
    <property type="entry name" value="EF-G_D2"/>
    <property type="match status" value="1"/>
</dbReference>
<dbReference type="Pfam" id="PF00009">
    <property type="entry name" value="GTP_EFTU"/>
    <property type="match status" value="1"/>
</dbReference>
<dbReference type="Pfam" id="PF03144">
    <property type="entry name" value="GTP_EFTU_D2"/>
    <property type="match status" value="1"/>
</dbReference>
<dbReference type="Pfam" id="PF11987">
    <property type="entry name" value="IF-2"/>
    <property type="match status" value="1"/>
</dbReference>
<dbReference type="Pfam" id="PF04760">
    <property type="entry name" value="IF2_N"/>
    <property type="match status" value="1"/>
</dbReference>
<dbReference type="SUPFAM" id="SSF52156">
    <property type="entry name" value="Initiation factor IF2/eIF5b, domain 3"/>
    <property type="match status" value="1"/>
</dbReference>
<dbReference type="SUPFAM" id="SSF52540">
    <property type="entry name" value="P-loop containing nucleoside triphosphate hydrolases"/>
    <property type="match status" value="1"/>
</dbReference>
<dbReference type="SUPFAM" id="SSF50447">
    <property type="entry name" value="Translation proteins"/>
    <property type="match status" value="2"/>
</dbReference>
<dbReference type="PROSITE" id="PS51722">
    <property type="entry name" value="G_TR_2"/>
    <property type="match status" value="1"/>
</dbReference>
<dbReference type="PROSITE" id="PS01176">
    <property type="entry name" value="IF2"/>
    <property type="match status" value="1"/>
</dbReference>
<gene>
    <name type="primary">infB</name>
    <name type="ordered locus">CT_096</name>
</gene>
<reference key="1">
    <citation type="journal article" date="1998" name="Science">
        <title>Genome sequence of an obligate intracellular pathogen of humans: Chlamydia trachomatis.</title>
        <authorList>
            <person name="Stephens R.S."/>
            <person name="Kalman S."/>
            <person name="Lammel C.J."/>
            <person name="Fan J."/>
            <person name="Marathe R."/>
            <person name="Aravind L."/>
            <person name="Mitchell W.P."/>
            <person name="Olinger L."/>
            <person name="Tatusov R.L."/>
            <person name="Zhao Q."/>
            <person name="Koonin E.V."/>
            <person name="Davis R.W."/>
        </authorList>
    </citation>
    <scope>NUCLEOTIDE SEQUENCE [LARGE SCALE GENOMIC DNA]</scope>
    <source>
        <strain>ATCC VR-885 / DSM 19411 / UW-3/Cx</strain>
    </source>
</reference>
<evidence type="ECO:0000250" key="1"/>
<evidence type="ECO:0000256" key="2">
    <source>
        <dbReference type="SAM" id="MobiDB-lite"/>
    </source>
</evidence>
<evidence type="ECO:0000305" key="3"/>
<name>IF2_CHLTR</name>
<sequence>MEKVKLTKNLKLKIKNAQLTKAAGLDKLKQKLAQAGSSDTKNSPASKAQTKEKSSKKTAGTPAPAPEVDSGATESTARRIRAKDRSSFAAEPTVTTALPGDASHLTLDAIPAMKAPEITSVTQKEQTLGECTDTSSVQQEEKKESSEETSPERVEETLIIRTRTEPKSVVSIKPKFGPTGKHINHLLAKTFKAPAKETKAASTEETTQQQPRQNDAASYNNKQQPSGTSSRPASSAPSYRRESTNNNNNAKRGSERDRSKRSDESVKAFTGRDRYGLNEGSSEEDKWRKKRVHKTKKQAEEHVVQCPAHIKIALPITVKDLAAEMKLKASELIQKLFIHGMTYVVNDVLDSQTVVEYIGLEFGCTIEIDSSAKEKLCLLENAVRDEVNATDPEKLIIRSPIVAFMGHVDHGKTTIIDALRQSNMAASEAGAITQHTGAFKCTTPVGEITVLDTPGHEAFSAMRARGAEVCDIVVLVVAGDEGIKEQTIEAIEHAKGANITIVVAINKCDKPNFNVETVYRQLAELDLLPEAWGGSIATINTSAKTGEGLQDLLEMLALQAEVLELKADPSARARGLVIESELHKGLGAVATVLVQNGTLHLGEALVFNDCYGKVKTMHDEHNQLLQSATPSTPVLITGLSAIPKAGDPFIVVKNEKVAKEIISARLAGQQRSAALQKKRPNFDAVLQNKKTLKLIIKADVQGSIEALAHSILNIRSEKVDVEILSSEVGDISESDIRLASASKATVIGFHTSVESHAEPLIKNLNVKVCLFDIIYHAVDAIKEIMTGLLDPIAEEKNLGAAEIKATFKSSQLGTIYGCLVTEGTIVRNQKIRIIRDKEVLWKGSLSSLKRLKEDVKEVKKGMECGILLDNYQQAQVGDILQCYEVIYHPQKL</sequence>
<protein>
    <recommendedName>
        <fullName>Translation initiation factor IF-2</fullName>
    </recommendedName>
</protein>
<keyword id="KW-0963">Cytoplasm</keyword>
<keyword id="KW-0342">GTP-binding</keyword>
<keyword id="KW-0396">Initiation factor</keyword>
<keyword id="KW-0547">Nucleotide-binding</keyword>
<keyword id="KW-0648">Protein biosynthesis</keyword>
<keyword id="KW-1185">Reference proteome</keyword>